<protein>
    <recommendedName>
        <fullName evidence="1">UPF0502 protein Rfer_1648</fullName>
    </recommendedName>
</protein>
<name>Y1648_ALBFT</name>
<proteinExistence type="inferred from homology"/>
<organism>
    <name type="scientific">Albidiferax ferrireducens (strain ATCC BAA-621 / DSM 15236 / T118)</name>
    <name type="common">Rhodoferax ferrireducens</name>
    <dbReference type="NCBI Taxonomy" id="338969"/>
    <lineage>
        <taxon>Bacteria</taxon>
        <taxon>Pseudomonadati</taxon>
        <taxon>Pseudomonadota</taxon>
        <taxon>Betaproteobacteria</taxon>
        <taxon>Burkholderiales</taxon>
        <taxon>Comamonadaceae</taxon>
        <taxon>Rhodoferax</taxon>
    </lineage>
</organism>
<sequence length="228" mass="24867">MITPLAPSTPSPVLTPIEARVLGTLMEKARTVPDSYPLTLNTLLLGCNQKSSREPLMELTEADVAAALNTLKEAHLVRESSGSRTTRFEHNFQRGIGVYEQAAVLLGLLMLRGPQTAGELRLNTERWYKFADISSVEGFLEELQDRSAEKGGPLVVKLARGPGTREQRWAHLLCGPVDATQTGLGRSSEGLPGNTAERLERLESELANLRETVQKLCAELGVSPPEQV</sequence>
<comment type="similarity">
    <text evidence="1">Belongs to the UPF0502 family.</text>
</comment>
<gene>
    <name type="ordered locus">Rfer_1648</name>
</gene>
<dbReference type="EMBL" id="CP000267">
    <property type="protein sequence ID" value="ABD69378.1"/>
    <property type="molecule type" value="Genomic_DNA"/>
</dbReference>
<dbReference type="SMR" id="Q21XX5"/>
<dbReference type="KEGG" id="rfr:Rfer_1648"/>
<dbReference type="eggNOG" id="COG3132">
    <property type="taxonomic scope" value="Bacteria"/>
</dbReference>
<dbReference type="HOGENOM" id="CLU_057831_0_0_4"/>
<dbReference type="Proteomes" id="UP000008332">
    <property type="component" value="Chromosome"/>
</dbReference>
<dbReference type="Gene3D" id="1.10.10.10">
    <property type="entry name" value="Winged helix-like DNA-binding domain superfamily/Winged helix DNA-binding domain"/>
    <property type="match status" value="2"/>
</dbReference>
<dbReference type="HAMAP" id="MF_01584">
    <property type="entry name" value="UPF0502"/>
    <property type="match status" value="1"/>
</dbReference>
<dbReference type="InterPro" id="IPR007432">
    <property type="entry name" value="DUF480"/>
</dbReference>
<dbReference type="InterPro" id="IPR036388">
    <property type="entry name" value="WH-like_DNA-bd_sf"/>
</dbReference>
<dbReference type="InterPro" id="IPR036390">
    <property type="entry name" value="WH_DNA-bd_sf"/>
</dbReference>
<dbReference type="PANTHER" id="PTHR38768">
    <property type="entry name" value="UPF0502 PROTEIN YCEH"/>
    <property type="match status" value="1"/>
</dbReference>
<dbReference type="PANTHER" id="PTHR38768:SF1">
    <property type="entry name" value="UPF0502 PROTEIN YCEH"/>
    <property type="match status" value="1"/>
</dbReference>
<dbReference type="Pfam" id="PF04337">
    <property type="entry name" value="DUF480"/>
    <property type="match status" value="1"/>
</dbReference>
<dbReference type="SUPFAM" id="SSF46785">
    <property type="entry name" value="Winged helix' DNA-binding domain"/>
    <property type="match status" value="2"/>
</dbReference>
<accession>Q21XX5</accession>
<reference key="1">
    <citation type="submission" date="2006-02" db="EMBL/GenBank/DDBJ databases">
        <title>Complete sequence of chromosome of Rhodoferax ferrireducens DSM 15236.</title>
        <authorList>
            <person name="Copeland A."/>
            <person name="Lucas S."/>
            <person name="Lapidus A."/>
            <person name="Barry K."/>
            <person name="Detter J.C."/>
            <person name="Glavina del Rio T."/>
            <person name="Hammon N."/>
            <person name="Israni S."/>
            <person name="Pitluck S."/>
            <person name="Brettin T."/>
            <person name="Bruce D."/>
            <person name="Han C."/>
            <person name="Tapia R."/>
            <person name="Gilna P."/>
            <person name="Kiss H."/>
            <person name="Schmutz J."/>
            <person name="Larimer F."/>
            <person name="Land M."/>
            <person name="Kyrpides N."/>
            <person name="Ivanova N."/>
            <person name="Richardson P."/>
        </authorList>
    </citation>
    <scope>NUCLEOTIDE SEQUENCE [LARGE SCALE GENOMIC DNA]</scope>
    <source>
        <strain>ATCC BAA-621 / DSM 15236 / T118</strain>
    </source>
</reference>
<evidence type="ECO:0000255" key="1">
    <source>
        <dbReference type="HAMAP-Rule" id="MF_01584"/>
    </source>
</evidence>
<feature type="chain" id="PRO_0000309416" description="UPF0502 protein Rfer_1648">
    <location>
        <begin position="1"/>
        <end position="228"/>
    </location>
</feature>
<keyword id="KW-1185">Reference proteome</keyword>